<evidence type="ECO:0000255" key="1">
    <source>
        <dbReference type="HAMAP-Rule" id="MF_00295"/>
    </source>
</evidence>
<keyword id="KW-0012">Acyltransferase</keyword>
<keyword id="KW-0028">Amino-acid biosynthesis</keyword>
<keyword id="KW-0963">Cytoplasm</keyword>
<keyword id="KW-0486">Methionine biosynthesis</keyword>
<keyword id="KW-1185">Reference proteome</keyword>
<keyword id="KW-0808">Transferase</keyword>
<comment type="function">
    <text evidence="1">Transfers an acetyl group from acetyl-CoA to L-homoserine, forming acetyl-L-homoserine.</text>
</comment>
<comment type="catalytic activity">
    <reaction evidence="1">
        <text>L-homoserine + acetyl-CoA = O-acetyl-L-homoserine + CoA</text>
        <dbReference type="Rhea" id="RHEA:13701"/>
        <dbReference type="ChEBI" id="CHEBI:57287"/>
        <dbReference type="ChEBI" id="CHEBI:57288"/>
        <dbReference type="ChEBI" id="CHEBI:57476"/>
        <dbReference type="ChEBI" id="CHEBI:57716"/>
        <dbReference type="EC" id="2.3.1.31"/>
    </reaction>
</comment>
<comment type="pathway">
    <text evidence="1">Amino-acid biosynthesis; L-methionine biosynthesis via de novo pathway; O-acetyl-L-homoserine from L-homoserine: step 1/1.</text>
</comment>
<comment type="subcellular location">
    <subcellularLocation>
        <location evidence="1">Cytoplasm</location>
    </subcellularLocation>
</comment>
<comment type="similarity">
    <text evidence="1">Belongs to the MetA family.</text>
</comment>
<feature type="chain" id="PRO_1000021848" description="Homoserine O-acetyltransferase">
    <location>
        <begin position="1"/>
        <end position="312"/>
    </location>
</feature>
<feature type="active site" description="Acyl-thioester intermediate" evidence="1">
    <location>
        <position position="142"/>
    </location>
</feature>
<feature type="active site" description="Proton acceptor" evidence="1">
    <location>
        <position position="235"/>
    </location>
</feature>
<feature type="active site" evidence="1">
    <location>
        <position position="237"/>
    </location>
</feature>
<feature type="binding site" evidence="1">
    <location>
        <position position="163"/>
    </location>
    <ligand>
        <name>substrate</name>
    </ligand>
</feature>
<feature type="binding site" evidence="1">
    <location>
        <position position="192"/>
    </location>
    <ligand>
        <name>substrate</name>
    </ligand>
</feature>
<feature type="binding site" evidence="1">
    <location>
        <position position="249"/>
    </location>
    <ligand>
        <name>substrate</name>
    </ligand>
</feature>
<feature type="site" description="Important for acyl-CoA specificity" evidence="1">
    <location>
        <position position="111"/>
    </location>
</feature>
<feature type="site" description="Important for substrate specificity" evidence="1">
    <location>
        <position position="192"/>
    </location>
</feature>
<sequence length="312" mass="35833">MPIKIPADLPAYSVLSDEGVMVMSPDQAARQDIRPIKIGLLNLMPKKIQTENQFARLIGATPLQIEFSLIRMTEHQTKNTAAAHMEEFYRPFQEVRDEKFDGLIITGAPIEHLPFEDVTYWQELCEVFEWTQTNVHSTFGVCWGGMAMINYFHGVRKHMLDHKAFGCFRHQNLQPTSPYLRGFSDDFVIPVSRWTEMSQSEIDAAPGLTTLLGSADVGPCLVEDKAHRALYIFNHFEYDSDTLKQEYDRDVASGTEINVPINYYPDDDPSQRPLNRWRSHAHLLYGNWVSEIYQTTPYDVERIGLDTTDLRA</sequence>
<reference key="1">
    <citation type="submission" date="2006-05" db="EMBL/GenBank/DDBJ databases">
        <title>Complete sequence of chromosome of Silicibacter sp. TM1040.</title>
        <authorList>
            <consortium name="US DOE Joint Genome Institute"/>
            <person name="Copeland A."/>
            <person name="Lucas S."/>
            <person name="Lapidus A."/>
            <person name="Barry K."/>
            <person name="Detter J.C."/>
            <person name="Glavina del Rio T."/>
            <person name="Hammon N."/>
            <person name="Israni S."/>
            <person name="Dalin E."/>
            <person name="Tice H."/>
            <person name="Pitluck S."/>
            <person name="Brettin T."/>
            <person name="Bruce D."/>
            <person name="Han C."/>
            <person name="Tapia R."/>
            <person name="Goodwin L."/>
            <person name="Thompson L.S."/>
            <person name="Gilna P."/>
            <person name="Schmutz J."/>
            <person name="Larimer F."/>
            <person name="Land M."/>
            <person name="Hauser L."/>
            <person name="Kyrpides N."/>
            <person name="Kim E."/>
            <person name="Belas R."/>
            <person name="Moran M.A."/>
            <person name="Buchan A."/>
            <person name="Gonzalez J.M."/>
            <person name="Schell M.A."/>
            <person name="Sun F."/>
            <person name="Richardson P."/>
        </authorList>
    </citation>
    <scope>NUCLEOTIDE SEQUENCE [LARGE SCALE GENOMIC DNA]</scope>
    <source>
        <strain>TM1040</strain>
    </source>
</reference>
<name>METAA_RUEST</name>
<dbReference type="EC" id="2.3.1.31" evidence="1"/>
<dbReference type="EMBL" id="CP000377">
    <property type="protein sequence ID" value="ABF64112.1"/>
    <property type="molecule type" value="Genomic_DNA"/>
</dbReference>
<dbReference type="RefSeq" id="WP_011538717.1">
    <property type="nucleotide sequence ID" value="NC_008044.1"/>
</dbReference>
<dbReference type="SMR" id="Q1GGV4"/>
<dbReference type="STRING" id="292414.TM1040_1379"/>
<dbReference type="KEGG" id="sit:TM1040_1379"/>
<dbReference type="eggNOG" id="COG1897">
    <property type="taxonomic scope" value="Bacteria"/>
</dbReference>
<dbReference type="HOGENOM" id="CLU_057851_0_1_5"/>
<dbReference type="OrthoDB" id="9772423at2"/>
<dbReference type="UniPathway" id="UPA00051">
    <property type="reaction ID" value="UER00074"/>
</dbReference>
<dbReference type="Proteomes" id="UP000000636">
    <property type="component" value="Chromosome"/>
</dbReference>
<dbReference type="GO" id="GO:0005737">
    <property type="term" value="C:cytoplasm"/>
    <property type="evidence" value="ECO:0007669"/>
    <property type="project" value="UniProtKB-SubCell"/>
</dbReference>
<dbReference type="GO" id="GO:0004414">
    <property type="term" value="F:homoserine O-acetyltransferase activity"/>
    <property type="evidence" value="ECO:0007669"/>
    <property type="project" value="UniProtKB-EC"/>
</dbReference>
<dbReference type="GO" id="GO:0008899">
    <property type="term" value="F:homoserine O-succinyltransferase activity"/>
    <property type="evidence" value="ECO:0007669"/>
    <property type="project" value="UniProtKB-UniRule"/>
</dbReference>
<dbReference type="GO" id="GO:0019281">
    <property type="term" value="P:L-methionine biosynthetic process from homoserine via O-succinyl-L-homoserine and cystathionine"/>
    <property type="evidence" value="ECO:0007669"/>
    <property type="project" value="InterPro"/>
</dbReference>
<dbReference type="CDD" id="cd03131">
    <property type="entry name" value="GATase1_HTS"/>
    <property type="match status" value="1"/>
</dbReference>
<dbReference type="Gene3D" id="3.40.50.880">
    <property type="match status" value="1"/>
</dbReference>
<dbReference type="HAMAP" id="MF_00295">
    <property type="entry name" value="MetA_acyltransf"/>
    <property type="match status" value="1"/>
</dbReference>
<dbReference type="InterPro" id="IPR029062">
    <property type="entry name" value="Class_I_gatase-like"/>
</dbReference>
<dbReference type="InterPro" id="IPR005697">
    <property type="entry name" value="HST_MetA"/>
</dbReference>
<dbReference type="InterPro" id="IPR033752">
    <property type="entry name" value="MetA_family"/>
</dbReference>
<dbReference type="NCBIfam" id="TIGR01001">
    <property type="entry name" value="metA"/>
    <property type="match status" value="1"/>
</dbReference>
<dbReference type="PANTHER" id="PTHR20919">
    <property type="entry name" value="HOMOSERINE O-SUCCINYLTRANSFERASE"/>
    <property type="match status" value="1"/>
</dbReference>
<dbReference type="PANTHER" id="PTHR20919:SF0">
    <property type="entry name" value="HOMOSERINE O-SUCCINYLTRANSFERASE"/>
    <property type="match status" value="1"/>
</dbReference>
<dbReference type="Pfam" id="PF04204">
    <property type="entry name" value="HTS"/>
    <property type="match status" value="1"/>
</dbReference>
<dbReference type="PIRSF" id="PIRSF000450">
    <property type="entry name" value="H_ser_succinyltr"/>
    <property type="match status" value="1"/>
</dbReference>
<dbReference type="SUPFAM" id="SSF52317">
    <property type="entry name" value="Class I glutamine amidotransferase-like"/>
    <property type="match status" value="1"/>
</dbReference>
<organism>
    <name type="scientific">Ruegeria sp. (strain TM1040)</name>
    <name type="common">Silicibacter sp.</name>
    <dbReference type="NCBI Taxonomy" id="292414"/>
    <lineage>
        <taxon>Bacteria</taxon>
        <taxon>Pseudomonadati</taxon>
        <taxon>Pseudomonadota</taxon>
        <taxon>Alphaproteobacteria</taxon>
        <taxon>Rhodobacterales</taxon>
        <taxon>Roseobacteraceae</taxon>
        <taxon>Ruegeria</taxon>
    </lineage>
</organism>
<gene>
    <name evidence="1" type="primary">metAA</name>
    <name type="ordered locus">TM1040_1379</name>
</gene>
<accession>Q1GGV4</accession>
<protein>
    <recommendedName>
        <fullName evidence="1">Homoserine O-acetyltransferase</fullName>
        <shortName evidence="1">HAT</shortName>
        <ecNumber evidence="1">2.3.1.31</ecNumber>
    </recommendedName>
    <alternativeName>
        <fullName evidence="1">Homoserine transacetylase</fullName>
        <shortName evidence="1">HTA</shortName>
    </alternativeName>
</protein>
<proteinExistence type="inferred from homology"/>